<protein>
    <recommendedName>
        <fullName>GDNF-inducible zinc finger protein 1</fullName>
    </recommendedName>
    <alternativeName>
        <fullName>Zinc finger protein 336</fullName>
    </alternativeName>
</protein>
<accession>Q4VBD9</accession>
<accession>Q8BGY0</accession>
<comment type="function">
    <text evidence="1">Transcriptional repressor that binds the GZF1 responsive element (GRE) (consensus: 5'-TGCGCN[TG][CA]TATA-3'). May be regulating VSX2/HOX10 expression.</text>
</comment>
<comment type="subunit">
    <text evidence="1">Interacts with NCL.</text>
</comment>
<comment type="subcellular location">
    <subcellularLocation>
        <location evidence="5 6">Nucleus</location>
    </subcellularLocation>
    <subcellularLocation>
        <location evidence="5 6">Cytoplasm</location>
    </subcellularLocation>
    <subcellularLocation>
        <location evidence="1">Nucleus</location>
        <location evidence="1">Nucleolus</location>
    </subcellularLocation>
    <text evidence="5">Predominantly nuclear.</text>
</comment>
<comment type="tissue specificity">
    <text evidence="5">Expressed in several tissues, with highest levels in liver. Also expressed in embryos from 7 to 17 dpc.</text>
</comment>
<comment type="developmental stage">
    <text evidence="5 6">At 13.5-14.5 dpc, strong expression in ureteric buds (at protein level). Expression decreases in the kidney after birth (at protein level). Expressed in the eyes and limbs during development (at protein level).</text>
</comment>
<comment type="similarity">
    <text evidence="7">Belongs to the krueppel C2H2-type zinc-finger protein family.</text>
</comment>
<sequence>MESGTVLLESKSSPLNLLHEMHELRLLGHLCDVTVSIENQGVHEDFMAHKAVLAATSKFFKEVFLNEKSADGTRTNVYLNEVQAVDFASFLEFVYTAKVRVEEDRVQQMLEVAEKLKCLDLSETCLQLKKQMLESVLLELQNFSESQEVEASSGPQVSVTPSSKASVPGEDAHSNGLVDSSDYPIERLGNGLSPETPSKKCKEKLDKKKDVAKPPFPKIRRASGRLAGKKVFVEIPKKKYTRRLREQQKSAEEAAENDKCPQDQSPDNERMETEPAAKSEACPASVELEESLQKVEGEKEEEEGKDGEEKKKSNFQCTVCDKAFLYEKSFLKHIKYHHGVATEVVYRCDTCGQTFANRCNLKSHQRHVHSSERHFPCEMCAKKFKRKKDVKRHVLQVHEGGGERHRCGQCGKGLSSKTALRLHERTHTGDKPYGCTKCDAKFSQPSALKTHLRVHTGERPFVCDECGARFTQNHMLIYHKRCHTGERPFMCETCGKSFASKEYLKHHNRIHTGSKPFKCEVCLRTFAQRNSLYQHIKVHTGERPYCCDQCGKQFTQVNALQRHHRIHTGEKPYMCNACGRTFTDKSTLRRHTSIHDKNTPWKSFLVIVDGSPKNDEGHKTEQPDDEYASPKLSDRLLSFGENSHFNNLLEVQGNVPAVQENSSTGAACKAVVSQDALLTTSISALGELTPQAVSMPAHLPSLTNME</sequence>
<name>GZF1_MOUSE</name>
<keyword id="KW-0963">Cytoplasm</keyword>
<keyword id="KW-0238">DNA-binding</keyword>
<keyword id="KW-0479">Metal-binding</keyword>
<keyword id="KW-0539">Nucleus</keyword>
<keyword id="KW-0597">Phosphoprotein</keyword>
<keyword id="KW-1185">Reference proteome</keyword>
<keyword id="KW-0677">Repeat</keyword>
<keyword id="KW-0678">Repressor</keyword>
<keyword id="KW-0804">Transcription</keyword>
<keyword id="KW-0805">Transcription regulation</keyword>
<keyword id="KW-0862">Zinc</keyword>
<keyword id="KW-0863">Zinc-finger</keyword>
<proteinExistence type="evidence at protein level"/>
<reference key="1">
    <citation type="journal article" date="2003" name="J. Biol. Chem.">
        <title>Identification of a novel glial cell line-derived neurotrophic factor-inducible gene required for renal branching morphogenesis.</title>
        <authorList>
            <person name="Fukuda N."/>
            <person name="Ichihara M."/>
            <person name="Morinaga T."/>
            <person name="Kawai K."/>
            <person name="Hayashi H."/>
            <person name="Murakumo Y."/>
            <person name="Matsuo S."/>
            <person name="Takahashi M."/>
        </authorList>
    </citation>
    <scope>NUCLEOTIDE SEQUENCE [MRNA]</scope>
    <scope>SUBCELLULAR LOCATION</scope>
    <scope>TISSUE SPECIFICITY</scope>
    <source>
        <tissue>Testis</tissue>
    </source>
</reference>
<reference key="2">
    <citation type="journal article" date="2005" name="Science">
        <title>The transcriptional landscape of the mammalian genome.</title>
        <authorList>
            <person name="Carninci P."/>
            <person name="Kasukawa T."/>
            <person name="Katayama S."/>
            <person name="Gough J."/>
            <person name="Frith M.C."/>
            <person name="Maeda N."/>
            <person name="Oyama R."/>
            <person name="Ravasi T."/>
            <person name="Lenhard B."/>
            <person name="Wells C."/>
            <person name="Kodzius R."/>
            <person name="Shimokawa K."/>
            <person name="Bajic V.B."/>
            <person name="Brenner S.E."/>
            <person name="Batalov S."/>
            <person name="Forrest A.R."/>
            <person name="Zavolan M."/>
            <person name="Davis M.J."/>
            <person name="Wilming L.G."/>
            <person name="Aidinis V."/>
            <person name="Allen J.E."/>
            <person name="Ambesi-Impiombato A."/>
            <person name="Apweiler R."/>
            <person name="Aturaliya R.N."/>
            <person name="Bailey T.L."/>
            <person name="Bansal M."/>
            <person name="Baxter L."/>
            <person name="Beisel K.W."/>
            <person name="Bersano T."/>
            <person name="Bono H."/>
            <person name="Chalk A.M."/>
            <person name="Chiu K.P."/>
            <person name="Choudhary V."/>
            <person name="Christoffels A."/>
            <person name="Clutterbuck D.R."/>
            <person name="Crowe M.L."/>
            <person name="Dalla E."/>
            <person name="Dalrymple B.P."/>
            <person name="de Bono B."/>
            <person name="Della Gatta G."/>
            <person name="di Bernardo D."/>
            <person name="Down T."/>
            <person name="Engstrom P."/>
            <person name="Fagiolini M."/>
            <person name="Faulkner G."/>
            <person name="Fletcher C.F."/>
            <person name="Fukushima T."/>
            <person name="Furuno M."/>
            <person name="Futaki S."/>
            <person name="Gariboldi M."/>
            <person name="Georgii-Hemming P."/>
            <person name="Gingeras T.R."/>
            <person name="Gojobori T."/>
            <person name="Green R.E."/>
            <person name="Gustincich S."/>
            <person name="Harbers M."/>
            <person name="Hayashi Y."/>
            <person name="Hensch T.K."/>
            <person name="Hirokawa N."/>
            <person name="Hill D."/>
            <person name="Huminiecki L."/>
            <person name="Iacono M."/>
            <person name="Ikeo K."/>
            <person name="Iwama A."/>
            <person name="Ishikawa T."/>
            <person name="Jakt M."/>
            <person name="Kanapin A."/>
            <person name="Katoh M."/>
            <person name="Kawasawa Y."/>
            <person name="Kelso J."/>
            <person name="Kitamura H."/>
            <person name="Kitano H."/>
            <person name="Kollias G."/>
            <person name="Krishnan S.P."/>
            <person name="Kruger A."/>
            <person name="Kummerfeld S.K."/>
            <person name="Kurochkin I.V."/>
            <person name="Lareau L.F."/>
            <person name="Lazarevic D."/>
            <person name="Lipovich L."/>
            <person name="Liu J."/>
            <person name="Liuni S."/>
            <person name="McWilliam S."/>
            <person name="Madan Babu M."/>
            <person name="Madera M."/>
            <person name="Marchionni L."/>
            <person name="Matsuda H."/>
            <person name="Matsuzawa S."/>
            <person name="Miki H."/>
            <person name="Mignone F."/>
            <person name="Miyake S."/>
            <person name="Morris K."/>
            <person name="Mottagui-Tabar S."/>
            <person name="Mulder N."/>
            <person name="Nakano N."/>
            <person name="Nakauchi H."/>
            <person name="Ng P."/>
            <person name="Nilsson R."/>
            <person name="Nishiguchi S."/>
            <person name="Nishikawa S."/>
            <person name="Nori F."/>
            <person name="Ohara O."/>
            <person name="Okazaki Y."/>
            <person name="Orlando V."/>
            <person name="Pang K.C."/>
            <person name="Pavan W.J."/>
            <person name="Pavesi G."/>
            <person name="Pesole G."/>
            <person name="Petrovsky N."/>
            <person name="Piazza S."/>
            <person name="Reed J."/>
            <person name="Reid J.F."/>
            <person name="Ring B.Z."/>
            <person name="Ringwald M."/>
            <person name="Rost B."/>
            <person name="Ruan Y."/>
            <person name="Salzberg S.L."/>
            <person name="Sandelin A."/>
            <person name="Schneider C."/>
            <person name="Schoenbach C."/>
            <person name="Sekiguchi K."/>
            <person name="Semple C.A."/>
            <person name="Seno S."/>
            <person name="Sessa L."/>
            <person name="Sheng Y."/>
            <person name="Shibata Y."/>
            <person name="Shimada H."/>
            <person name="Shimada K."/>
            <person name="Silva D."/>
            <person name="Sinclair B."/>
            <person name="Sperling S."/>
            <person name="Stupka E."/>
            <person name="Sugiura K."/>
            <person name="Sultana R."/>
            <person name="Takenaka Y."/>
            <person name="Taki K."/>
            <person name="Tammoja K."/>
            <person name="Tan S.L."/>
            <person name="Tang S."/>
            <person name="Taylor M.S."/>
            <person name="Tegner J."/>
            <person name="Teichmann S.A."/>
            <person name="Ueda H.R."/>
            <person name="van Nimwegen E."/>
            <person name="Verardo R."/>
            <person name="Wei C.L."/>
            <person name="Yagi K."/>
            <person name="Yamanishi H."/>
            <person name="Zabarovsky E."/>
            <person name="Zhu S."/>
            <person name="Zimmer A."/>
            <person name="Hide W."/>
            <person name="Bult C."/>
            <person name="Grimmond S.M."/>
            <person name="Teasdale R.D."/>
            <person name="Liu E.T."/>
            <person name="Brusic V."/>
            <person name="Quackenbush J."/>
            <person name="Wahlestedt C."/>
            <person name="Mattick J.S."/>
            <person name="Hume D.A."/>
            <person name="Kai C."/>
            <person name="Sasaki D."/>
            <person name="Tomaru Y."/>
            <person name="Fukuda S."/>
            <person name="Kanamori-Katayama M."/>
            <person name="Suzuki M."/>
            <person name="Aoki J."/>
            <person name="Arakawa T."/>
            <person name="Iida J."/>
            <person name="Imamura K."/>
            <person name="Itoh M."/>
            <person name="Kato T."/>
            <person name="Kawaji H."/>
            <person name="Kawagashira N."/>
            <person name="Kawashima T."/>
            <person name="Kojima M."/>
            <person name="Kondo S."/>
            <person name="Konno H."/>
            <person name="Nakano K."/>
            <person name="Ninomiya N."/>
            <person name="Nishio T."/>
            <person name="Okada M."/>
            <person name="Plessy C."/>
            <person name="Shibata K."/>
            <person name="Shiraki T."/>
            <person name="Suzuki S."/>
            <person name="Tagami M."/>
            <person name="Waki K."/>
            <person name="Watahiki A."/>
            <person name="Okamura-Oho Y."/>
            <person name="Suzuki H."/>
            <person name="Kawai J."/>
            <person name="Hayashizaki Y."/>
        </authorList>
    </citation>
    <scope>NUCLEOTIDE SEQUENCE [LARGE SCALE MRNA]</scope>
    <source>
        <strain>C57BL/6J</strain>
        <tissue>Cerebellum</tissue>
        <tissue>Eye</tissue>
        <tissue>Mammary gland</tissue>
    </source>
</reference>
<reference key="3">
    <citation type="journal article" date="2009" name="PLoS Biol.">
        <title>Lineage-specific biology revealed by a finished genome assembly of the mouse.</title>
        <authorList>
            <person name="Church D.M."/>
            <person name="Goodstadt L."/>
            <person name="Hillier L.W."/>
            <person name="Zody M.C."/>
            <person name="Goldstein S."/>
            <person name="She X."/>
            <person name="Bult C.J."/>
            <person name="Agarwala R."/>
            <person name="Cherry J.L."/>
            <person name="DiCuccio M."/>
            <person name="Hlavina W."/>
            <person name="Kapustin Y."/>
            <person name="Meric P."/>
            <person name="Maglott D."/>
            <person name="Birtle Z."/>
            <person name="Marques A.C."/>
            <person name="Graves T."/>
            <person name="Zhou S."/>
            <person name="Teague B."/>
            <person name="Potamousis K."/>
            <person name="Churas C."/>
            <person name="Place M."/>
            <person name="Herschleb J."/>
            <person name="Runnheim R."/>
            <person name="Forrest D."/>
            <person name="Amos-Landgraf J."/>
            <person name="Schwartz D.C."/>
            <person name="Cheng Z."/>
            <person name="Lindblad-Toh K."/>
            <person name="Eichler E.E."/>
            <person name="Ponting C.P."/>
        </authorList>
    </citation>
    <scope>NUCLEOTIDE SEQUENCE [LARGE SCALE GENOMIC DNA]</scope>
    <source>
        <strain>C57BL/6J</strain>
    </source>
</reference>
<reference key="4">
    <citation type="submission" date="2005-07" db="EMBL/GenBank/DDBJ databases">
        <authorList>
            <person name="Mural R.J."/>
            <person name="Adams M.D."/>
            <person name="Myers E.W."/>
            <person name="Smith H.O."/>
            <person name="Venter J.C."/>
        </authorList>
    </citation>
    <scope>NUCLEOTIDE SEQUENCE [LARGE SCALE GENOMIC DNA]</scope>
</reference>
<reference key="5">
    <citation type="journal article" date="2004" name="Genome Res.">
        <title>The status, quality, and expansion of the NIH full-length cDNA project: the Mammalian Gene Collection (MGC).</title>
        <authorList>
            <consortium name="The MGC Project Team"/>
        </authorList>
    </citation>
    <scope>NUCLEOTIDE SEQUENCE [LARGE SCALE MRNA]</scope>
    <source>
        <strain>C57BL/6J</strain>
        <tissue>Embryonic brain</tissue>
    </source>
</reference>
<reference key="6">
    <citation type="journal article" date="2010" name="Cell">
        <title>A tissue-specific atlas of mouse protein phosphorylation and expression.</title>
        <authorList>
            <person name="Huttlin E.L."/>
            <person name="Jedrychowski M.P."/>
            <person name="Elias J.E."/>
            <person name="Goswami T."/>
            <person name="Rad R."/>
            <person name="Beausoleil S.A."/>
            <person name="Villen J."/>
            <person name="Haas W."/>
            <person name="Sowa M.E."/>
            <person name="Gygi S.P."/>
        </authorList>
    </citation>
    <scope>PHOSPHORYLATION [LARGE SCALE ANALYSIS] AT SER-611</scope>
    <scope>IDENTIFICATION BY MASS SPECTROMETRY [LARGE SCALE ANALYSIS]</scope>
    <source>
        <tissue>Kidney</tissue>
        <tissue>Pancreas</tissue>
        <tissue>Testis</tissue>
    </source>
</reference>
<reference key="7">
    <citation type="journal article" date="2017" name="Am. J. Hum. Genet.">
        <title>GZF1 Mutations Expand the Genetic Heterogeneity of Larsen Syndrome.</title>
        <authorList>
            <person name="Patel N."/>
            <person name="Shamseldin H.E."/>
            <person name="Sakati N."/>
            <person name="Khan A.O."/>
            <person name="Softa A."/>
            <person name="Al-Fadhli F.M."/>
            <person name="Hashem M."/>
            <person name="Abdulwahab F.M."/>
            <person name="Alshidi T."/>
            <person name="Alomar R."/>
            <person name="Alobeid E."/>
            <person name="Wakil S.M."/>
            <person name="Colak D."/>
            <person name="Alkuraya F.S."/>
        </authorList>
    </citation>
    <scope>SUBCELLULAR LOCATION</scope>
    <scope>TISSUE SPECIFICITY</scope>
</reference>
<dbReference type="EMBL" id="AB100266">
    <property type="protein sequence ID" value="BAC98465.1"/>
    <property type="molecule type" value="mRNA"/>
</dbReference>
<dbReference type="EMBL" id="AK052820">
    <property type="protein sequence ID" value="BAC35160.1"/>
    <property type="molecule type" value="mRNA"/>
</dbReference>
<dbReference type="EMBL" id="AK053262">
    <property type="protein sequence ID" value="BAC35327.1"/>
    <property type="molecule type" value="mRNA"/>
</dbReference>
<dbReference type="EMBL" id="AK141153">
    <property type="protein sequence ID" value="BAE24571.1"/>
    <property type="molecule type" value="mRNA"/>
</dbReference>
<dbReference type="EMBL" id="AL928638">
    <property type="status" value="NOT_ANNOTATED_CDS"/>
    <property type="molecule type" value="Genomic_DNA"/>
</dbReference>
<dbReference type="EMBL" id="CH466519">
    <property type="protein sequence ID" value="EDL28537.1"/>
    <property type="molecule type" value="Genomic_DNA"/>
</dbReference>
<dbReference type="EMBL" id="CH466519">
    <property type="protein sequence ID" value="EDL28538.1"/>
    <property type="molecule type" value="Genomic_DNA"/>
</dbReference>
<dbReference type="EMBL" id="BC096015">
    <property type="protein sequence ID" value="AAH96015.1"/>
    <property type="molecule type" value="mRNA"/>
</dbReference>
<dbReference type="CCDS" id="CCDS16841.1"/>
<dbReference type="RefSeq" id="NP_001342618.1">
    <property type="nucleotide sequence ID" value="NM_001355689.2"/>
</dbReference>
<dbReference type="RefSeq" id="NP_083262.1">
    <property type="nucleotide sequence ID" value="NM_028986.4"/>
</dbReference>
<dbReference type="RefSeq" id="XP_006500367.1">
    <property type="nucleotide sequence ID" value="XM_006500304.3"/>
</dbReference>
<dbReference type="RefSeq" id="XP_006500368.1">
    <property type="nucleotide sequence ID" value="XM_006500305.5"/>
</dbReference>
<dbReference type="RefSeq" id="XP_036018538.1">
    <property type="nucleotide sequence ID" value="XM_036162645.1"/>
</dbReference>
<dbReference type="SMR" id="Q4VBD9"/>
<dbReference type="BioGRID" id="216825">
    <property type="interactions" value="31"/>
</dbReference>
<dbReference type="FunCoup" id="Q4VBD9">
    <property type="interactions" value="2661"/>
</dbReference>
<dbReference type="STRING" id="10090.ENSMUSP00000028928"/>
<dbReference type="GlyGen" id="Q4VBD9">
    <property type="glycosylation" value="1 site"/>
</dbReference>
<dbReference type="iPTMnet" id="Q4VBD9"/>
<dbReference type="PhosphoSitePlus" id="Q4VBD9"/>
<dbReference type="jPOST" id="Q4VBD9"/>
<dbReference type="PaxDb" id="10090-ENSMUSP00000028928"/>
<dbReference type="PeptideAtlas" id="Q4VBD9"/>
<dbReference type="ProteomicsDB" id="271354"/>
<dbReference type="Pumba" id="Q4VBD9"/>
<dbReference type="Antibodypedia" id="9733">
    <property type="antibodies" value="52 antibodies from 19 providers"/>
</dbReference>
<dbReference type="DNASU" id="74533"/>
<dbReference type="Ensembl" id="ENSMUST00000028928.8">
    <property type="protein sequence ID" value="ENSMUSP00000028928.8"/>
    <property type="gene ID" value="ENSMUSG00000027439.10"/>
</dbReference>
<dbReference type="GeneID" id="74533"/>
<dbReference type="KEGG" id="mmu:74533"/>
<dbReference type="UCSC" id="uc008mtg.2">
    <property type="organism name" value="mouse"/>
</dbReference>
<dbReference type="AGR" id="MGI:1921783"/>
<dbReference type="CTD" id="64412"/>
<dbReference type="MGI" id="MGI:1921783">
    <property type="gene designation" value="Gzf1"/>
</dbReference>
<dbReference type="VEuPathDB" id="HostDB:ENSMUSG00000027439"/>
<dbReference type="eggNOG" id="KOG1721">
    <property type="taxonomic scope" value="Eukaryota"/>
</dbReference>
<dbReference type="GeneTree" id="ENSGT00870000136554"/>
<dbReference type="HOGENOM" id="CLU_018348_1_0_1"/>
<dbReference type="InParanoid" id="Q4VBD9"/>
<dbReference type="OMA" id="PFMCESC"/>
<dbReference type="OrthoDB" id="1095242at2759"/>
<dbReference type="PhylomeDB" id="Q4VBD9"/>
<dbReference type="TreeFam" id="TF350965"/>
<dbReference type="BioGRID-ORCS" id="74533">
    <property type="hits" value="6 hits in 78 CRISPR screens"/>
</dbReference>
<dbReference type="ChiTaRS" id="Gzf1">
    <property type="organism name" value="mouse"/>
</dbReference>
<dbReference type="PRO" id="PR:Q4VBD9"/>
<dbReference type="Proteomes" id="UP000000589">
    <property type="component" value="Chromosome 2"/>
</dbReference>
<dbReference type="RNAct" id="Q4VBD9">
    <property type="molecule type" value="protein"/>
</dbReference>
<dbReference type="Bgee" id="ENSMUSG00000027439">
    <property type="expression patterns" value="Expressed in animal zygote and 230 other cell types or tissues"/>
</dbReference>
<dbReference type="ExpressionAtlas" id="Q4VBD9">
    <property type="expression patterns" value="baseline and differential"/>
</dbReference>
<dbReference type="GO" id="GO:0005737">
    <property type="term" value="C:cytoplasm"/>
    <property type="evidence" value="ECO:0007669"/>
    <property type="project" value="UniProtKB-SubCell"/>
</dbReference>
<dbReference type="GO" id="GO:0005730">
    <property type="term" value="C:nucleolus"/>
    <property type="evidence" value="ECO:0007669"/>
    <property type="project" value="UniProtKB-SubCell"/>
</dbReference>
<dbReference type="GO" id="GO:0005654">
    <property type="term" value="C:nucleoplasm"/>
    <property type="evidence" value="ECO:0007669"/>
    <property type="project" value="Ensembl"/>
</dbReference>
<dbReference type="GO" id="GO:0005634">
    <property type="term" value="C:nucleus"/>
    <property type="evidence" value="ECO:0000314"/>
    <property type="project" value="MGI"/>
</dbReference>
<dbReference type="GO" id="GO:0001227">
    <property type="term" value="F:DNA-binding transcription repressor activity, RNA polymerase II-specific"/>
    <property type="evidence" value="ECO:0007669"/>
    <property type="project" value="Ensembl"/>
</dbReference>
<dbReference type="GO" id="GO:0000978">
    <property type="term" value="F:RNA polymerase II cis-regulatory region sequence-specific DNA binding"/>
    <property type="evidence" value="ECO:0007669"/>
    <property type="project" value="Ensembl"/>
</dbReference>
<dbReference type="GO" id="GO:0043565">
    <property type="term" value="F:sequence-specific DNA binding"/>
    <property type="evidence" value="ECO:0000250"/>
    <property type="project" value="UniProtKB"/>
</dbReference>
<dbReference type="GO" id="GO:0008270">
    <property type="term" value="F:zinc ion binding"/>
    <property type="evidence" value="ECO:0007669"/>
    <property type="project" value="UniProtKB-KW"/>
</dbReference>
<dbReference type="GO" id="GO:0001658">
    <property type="term" value="P:branching involved in ureteric bud morphogenesis"/>
    <property type="evidence" value="ECO:0000315"/>
    <property type="project" value="MGI"/>
</dbReference>
<dbReference type="GO" id="GO:0045892">
    <property type="term" value="P:negative regulation of DNA-templated transcription"/>
    <property type="evidence" value="ECO:0000250"/>
    <property type="project" value="UniProtKB"/>
</dbReference>
<dbReference type="GO" id="GO:0000122">
    <property type="term" value="P:negative regulation of transcription by RNA polymerase II"/>
    <property type="evidence" value="ECO:0000314"/>
    <property type="project" value="MGI"/>
</dbReference>
<dbReference type="CDD" id="cd18211">
    <property type="entry name" value="BTB_POZ_ZBTB23_GZF1"/>
    <property type="match status" value="1"/>
</dbReference>
<dbReference type="FunFam" id="3.30.160.60:FF:000657">
    <property type="entry name" value="GDNF inducible zinc finger protein 1"/>
    <property type="match status" value="1"/>
</dbReference>
<dbReference type="FunFam" id="3.30.160.60:FF:001563">
    <property type="entry name" value="GDNF inducible zinc finger protein 1"/>
    <property type="match status" value="1"/>
</dbReference>
<dbReference type="FunFam" id="3.30.160.60:FF:001633">
    <property type="entry name" value="GDNF inducible zinc finger protein 1"/>
    <property type="match status" value="1"/>
</dbReference>
<dbReference type="FunFam" id="3.30.710.10:FF:000090">
    <property type="entry name" value="GDNF inducible zinc finger protein 1"/>
    <property type="match status" value="1"/>
</dbReference>
<dbReference type="FunFam" id="3.30.160.60:FF:000322">
    <property type="entry name" value="GDNF-inducible zinc finger protein 1"/>
    <property type="match status" value="1"/>
</dbReference>
<dbReference type="FunFam" id="3.30.160.60:FF:000709">
    <property type="entry name" value="GDNF-inducible zinc finger protein 1"/>
    <property type="match status" value="1"/>
</dbReference>
<dbReference type="FunFam" id="3.30.160.60:FF:003287">
    <property type="entry name" value="Zgc:113343"/>
    <property type="match status" value="1"/>
</dbReference>
<dbReference type="FunFam" id="3.30.160.60:FF:000701">
    <property type="entry name" value="Zinc finger and BTB domain containing 40"/>
    <property type="match status" value="1"/>
</dbReference>
<dbReference type="FunFam" id="3.30.160.60:FF:002343">
    <property type="entry name" value="Zinc finger protein 33A"/>
    <property type="match status" value="1"/>
</dbReference>
<dbReference type="Gene3D" id="3.30.160.60">
    <property type="entry name" value="Classic Zinc Finger"/>
    <property type="match status" value="9"/>
</dbReference>
<dbReference type="Gene3D" id="3.30.710.10">
    <property type="entry name" value="Potassium Channel Kv1.1, Chain A"/>
    <property type="match status" value="1"/>
</dbReference>
<dbReference type="InterPro" id="IPR000210">
    <property type="entry name" value="BTB/POZ_dom"/>
</dbReference>
<dbReference type="InterPro" id="IPR011333">
    <property type="entry name" value="SKP1/BTB/POZ_sf"/>
</dbReference>
<dbReference type="InterPro" id="IPR036236">
    <property type="entry name" value="Znf_C2H2_sf"/>
</dbReference>
<dbReference type="InterPro" id="IPR013087">
    <property type="entry name" value="Znf_C2H2_type"/>
</dbReference>
<dbReference type="PANTHER" id="PTHR23226">
    <property type="entry name" value="ZINC FINGER AND SCAN DOMAIN-CONTAINING"/>
    <property type="match status" value="1"/>
</dbReference>
<dbReference type="Pfam" id="PF00651">
    <property type="entry name" value="BTB"/>
    <property type="match status" value="1"/>
</dbReference>
<dbReference type="Pfam" id="PF00096">
    <property type="entry name" value="zf-C2H2"/>
    <property type="match status" value="8"/>
</dbReference>
<dbReference type="Pfam" id="PF13912">
    <property type="entry name" value="zf-C2H2_6"/>
    <property type="match status" value="1"/>
</dbReference>
<dbReference type="SMART" id="SM00225">
    <property type="entry name" value="BTB"/>
    <property type="match status" value="1"/>
</dbReference>
<dbReference type="SMART" id="SM00355">
    <property type="entry name" value="ZnF_C2H2"/>
    <property type="match status" value="10"/>
</dbReference>
<dbReference type="SUPFAM" id="SSF57667">
    <property type="entry name" value="beta-beta-alpha zinc fingers"/>
    <property type="match status" value="6"/>
</dbReference>
<dbReference type="SUPFAM" id="SSF54695">
    <property type="entry name" value="POZ domain"/>
    <property type="match status" value="1"/>
</dbReference>
<dbReference type="PROSITE" id="PS50097">
    <property type="entry name" value="BTB"/>
    <property type="match status" value="1"/>
</dbReference>
<dbReference type="PROSITE" id="PS00028">
    <property type="entry name" value="ZINC_FINGER_C2H2_1"/>
    <property type="match status" value="10"/>
</dbReference>
<dbReference type="PROSITE" id="PS50157">
    <property type="entry name" value="ZINC_FINGER_C2H2_2"/>
    <property type="match status" value="10"/>
</dbReference>
<organism>
    <name type="scientific">Mus musculus</name>
    <name type="common">Mouse</name>
    <dbReference type="NCBI Taxonomy" id="10090"/>
    <lineage>
        <taxon>Eukaryota</taxon>
        <taxon>Metazoa</taxon>
        <taxon>Chordata</taxon>
        <taxon>Craniata</taxon>
        <taxon>Vertebrata</taxon>
        <taxon>Euteleostomi</taxon>
        <taxon>Mammalia</taxon>
        <taxon>Eutheria</taxon>
        <taxon>Euarchontoglires</taxon>
        <taxon>Glires</taxon>
        <taxon>Rodentia</taxon>
        <taxon>Myomorpha</taxon>
        <taxon>Muroidea</taxon>
        <taxon>Muridae</taxon>
        <taxon>Murinae</taxon>
        <taxon>Mus</taxon>
        <taxon>Mus</taxon>
    </lineage>
</organism>
<evidence type="ECO:0000250" key="1">
    <source>
        <dbReference type="UniProtKB" id="Q9H116"/>
    </source>
</evidence>
<evidence type="ECO:0000255" key="2">
    <source>
        <dbReference type="PROSITE-ProRule" id="PRU00037"/>
    </source>
</evidence>
<evidence type="ECO:0000255" key="3">
    <source>
        <dbReference type="PROSITE-ProRule" id="PRU00042"/>
    </source>
</evidence>
<evidence type="ECO:0000256" key="4">
    <source>
        <dbReference type="SAM" id="MobiDB-lite"/>
    </source>
</evidence>
<evidence type="ECO:0000269" key="5">
    <source>
    </source>
</evidence>
<evidence type="ECO:0000269" key="6">
    <source>
    </source>
</evidence>
<evidence type="ECO:0000305" key="7"/>
<evidence type="ECO:0000312" key="8">
    <source>
        <dbReference type="MGI" id="MGI:1921783"/>
    </source>
</evidence>
<evidence type="ECO:0007744" key="9">
    <source>
    </source>
</evidence>
<gene>
    <name evidence="8" type="primary">Gzf1</name>
    <name type="synonym">Zfp336</name>
</gene>
<feature type="chain" id="PRO_0000409660" description="GDNF-inducible zinc finger protein 1">
    <location>
        <begin position="1"/>
        <end position="706"/>
    </location>
</feature>
<feature type="domain" description="BTB" evidence="2">
    <location>
        <begin position="31"/>
        <end position="103"/>
    </location>
</feature>
<feature type="zinc finger region" description="C2H2-type 1" evidence="3">
    <location>
        <begin position="315"/>
        <end position="337"/>
    </location>
</feature>
<feature type="zinc finger region" description="C2H2-type 2" evidence="3">
    <location>
        <begin position="346"/>
        <end position="369"/>
    </location>
</feature>
<feature type="zinc finger region" description="C2H2-type 3" evidence="3">
    <location>
        <begin position="375"/>
        <end position="398"/>
    </location>
</feature>
<feature type="zinc finger region" description="C2H2-type 4" evidence="3">
    <location>
        <begin position="405"/>
        <end position="427"/>
    </location>
</feature>
<feature type="zinc finger region" description="C2H2-type 5" evidence="3">
    <location>
        <begin position="433"/>
        <end position="455"/>
    </location>
</feature>
<feature type="zinc finger region" description="C2H2-type 6" evidence="3">
    <location>
        <begin position="461"/>
        <end position="483"/>
    </location>
</feature>
<feature type="zinc finger region" description="C2H2-type 7" evidence="3">
    <location>
        <begin position="489"/>
        <end position="511"/>
    </location>
</feature>
<feature type="zinc finger region" description="C2H2-type 8" evidence="3">
    <location>
        <begin position="517"/>
        <end position="539"/>
    </location>
</feature>
<feature type="zinc finger region" description="C2H2-type 9" evidence="3">
    <location>
        <begin position="545"/>
        <end position="567"/>
    </location>
</feature>
<feature type="zinc finger region" description="C2H2-type 10" evidence="3">
    <location>
        <begin position="573"/>
        <end position="595"/>
    </location>
</feature>
<feature type="region of interest" description="Disordered" evidence="4">
    <location>
        <begin position="149"/>
        <end position="220"/>
    </location>
</feature>
<feature type="region of interest" description="Disordered" evidence="4">
    <location>
        <begin position="242"/>
        <end position="308"/>
    </location>
</feature>
<feature type="compositionally biased region" description="Polar residues" evidence="4">
    <location>
        <begin position="149"/>
        <end position="165"/>
    </location>
</feature>
<feature type="compositionally biased region" description="Basic and acidic residues" evidence="4">
    <location>
        <begin position="197"/>
        <end position="212"/>
    </location>
</feature>
<feature type="compositionally biased region" description="Basic and acidic residues" evidence="4">
    <location>
        <begin position="242"/>
        <end position="277"/>
    </location>
</feature>
<feature type="modified residue" description="Phosphoserine" evidence="9">
    <location>
        <position position="611"/>
    </location>
</feature>
<feature type="sequence conflict" description="In Ref. 5; AAH96015." evidence="7" ref="5">
    <original>R</original>
    <variation>T</variation>
    <location>
        <position position="187"/>
    </location>
</feature>